<sequence length="370" mass="41615">MRVKEQLLTLRAYVPGKNIEEVKREYGLSKIVKLASNENPFGCSARVTEALTSLASQYALYPDGHAFELRTQVAKHLGVKVEQLLFGSGLDEVIQMISRALLHEGTNVVMANPTFSQYHHHAVIEGAEVREVSLKDGIHDLDAMLQQVDDQTKIVWICNPNNPTGTYVEKQKLLSFLEAVPKSALVIMDEAYYEYAGAEDYPQTLPLLEKYENLMVLRTFSKAYGLAAFRIGYAVGNTELIGQLEVARLPFNTSTVAQSVALAALEDQAFLQECVKKNEEGLHQYYAFCKEYNVFYYPSQTNFIFLKLGIPGNEAFERLMKKGYIVRSGAAFGIDDGIRITVGLKEENDEIIELLKELVNEQVQKEETYS</sequence>
<feature type="chain" id="PRO_0000153303" description="Histidinol-phosphate aminotransferase 1">
    <location>
        <begin position="1"/>
        <end position="370"/>
    </location>
</feature>
<feature type="modified residue" description="N6-(pyridoxal phosphate)lysine" evidence="1">
    <location>
        <position position="222"/>
    </location>
</feature>
<protein>
    <recommendedName>
        <fullName evidence="1">Histidinol-phosphate aminotransferase 1</fullName>
        <ecNumber evidence="1">2.6.1.9</ecNumber>
    </recommendedName>
    <alternativeName>
        <fullName evidence="1">Imidazole acetol-phosphate transaminase 1</fullName>
    </alternativeName>
</protein>
<name>HIS81_BACCZ</name>
<accession>Q63DL4</accession>
<evidence type="ECO:0000255" key="1">
    <source>
        <dbReference type="HAMAP-Rule" id="MF_01023"/>
    </source>
</evidence>
<proteinExistence type="inferred from homology"/>
<gene>
    <name evidence="1" type="primary">hisC1</name>
    <name type="ordered locus">BCE33L1400</name>
</gene>
<keyword id="KW-0028">Amino-acid biosynthesis</keyword>
<keyword id="KW-0032">Aminotransferase</keyword>
<keyword id="KW-0368">Histidine biosynthesis</keyword>
<keyword id="KW-0663">Pyridoxal phosphate</keyword>
<keyword id="KW-0808">Transferase</keyword>
<organism>
    <name type="scientific">Bacillus cereus (strain ZK / E33L)</name>
    <dbReference type="NCBI Taxonomy" id="288681"/>
    <lineage>
        <taxon>Bacteria</taxon>
        <taxon>Bacillati</taxon>
        <taxon>Bacillota</taxon>
        <taxon>Bacilli</taxon>
        <taxon>Bacillales</taxon>
        <taxon>Bacillaceae</taxon>
        <taxon>Bacillus</taxon>
        <taxon>Bacillus cereus group</taxon>
    </lineage>
</organism>
<comment type="catalytic activity">
    <reaction evidence="1">
        <text>L-histidinol phosphate + 2-oxoglutarate = 3-(imidazol-4-yl)-2-oxopropyl phosphate + L-glutamate</text>
        <dbReference type="Rhea" id="RHEA:23744"/>
        <dbReference type="ChEBI" id="CHEBI:16810"/>
        <dbReference type="ChEBI" id="CHEBI:29985"/>
        <dbReference type="ChEBI" id="CHEBI:57766"/>
        <dbReference type="ChEBI" id="CHEBI:57980"/>
        <dbReference type="EC" id="2.6.1.9"/>
    </reaction>
</comment>
<comment type="cofactor">
    <cofactor evidence="1">
        <name>pyridoxal 5'-phosphate</name>
        <dbReference type="ChEBI" id="CHEBI:597326"/>
    </cofactor>
</comment>
<comment type="pathway">
    <text evidence="1">Amino-acid biosynthesis; L-histidine biosynthesis; L-histidine from 5-phospho-alpha-D-ribose 1-diphosphate: step 7/9.</text>
</comment>
<comment type="subunit">
    <text evidence="1">Homodimer.</text>
</comment>
<comment type="similarity">
    <text evidence="1">Belongs to the class-II pyridoxal-phosphate-dependent aminotransferase family. Histidinol-phosphate aminotransferase subfamily.</text>
</comment>
<reference key="1">
    <citation type="journal article" date="2006" name="J. Bacteriol.">
        <title>Pathogenomic sequence analysis of Bacillus cereus and Bacillus thuringiensis isolates closely related to Bacillus anthracis.</title>
        <authorList>
            <person name="Han C.S."/>
            <person name="Xie G."/>
            <person name="Challacombe J.F."/>
            <person name="Altherr M.R."/>
            <person name="Bhotika S.S."/>
            <person name="Bruce D."/>
            <person name="Campbell C.S."/>
            <person name="Campbell M.L."/>
            <person name="Chen J."/>
            <person name="Chertkov O."/>
            <person name="Cleland C."/>
            <person name="Dimitrijevic M."/>
            <person name="Doggett N.A."/>
            <person name="Fawcett J.J."/>
            <person name="Glavina T."/>
            <person name="Goodwin L.A."/>
            <person name="Hill K.K."/>
            <person name="Hitchcock P."/>
            <person name="Jackson P.J."/>
            <person name="Keim P."/>
            <person name="Kewalramani A.R."/>
            <person name="Longmire J."/>
            <person name="Lucas S."/>
            <person name="Malfatti S."/>
            <person name="McMurry K."/>
            <person name="Meincke L.J."/>
            <person name="Misra M."/>
            <person name="Moseman B.L."/>
            <person name="Mundt M."/>
            <person name="Munk A.C."/>
            <person name="Okinaka R.T."/>
            <person name="Parson-Quintana B."/>
            <person name="Reilly L.P."/>
            <person name="Richardson P."/>
            <person name="Robinson D.L."/>
            <person name="Rubin E."/>
            <person name="Saunders E."/>
            <person name="Tapia R."/>
            <person name="Tesmer J.G."/>
            <person name="Thayer N."/>
            <person name="Thompson L.S."/>
            <person name="Tice H."/>
            <person name="Ticknor L.O."/>
            <person name="Wills P.L."/>
            <person name="Brettin T.S."/>
            <person name="Gilna P."/>
        </authorList>
    </citation>
    <scope>NUCLEOTIDE SEQUENCE [LARGE SCALE GENOMIC DNA]</scope>
    <source>
        <strain>ZK / E33L</strain>
    </source>
</reference>
<dbReference type="EC" id="2.6.1.9" evidence="1"/>
<dbReference type="EMBL" id="CP000001">
    <property type="protein sequence ID" value="AAU18850.1"/>
    <property type="molecule type" value="Genomic_DNA"/>
</dbReference>
<dbReference type="RefSeq" id="WP_001264016.1">
    <property type="nucleotide sequence ID" value="NC_006274.1"/>
</dbReference>
<dbReference type="SMR" id="Q63DL4"/>
<dbReference type="KEGG" id="bcz:BCE33L1400"/>
<dbReference type="PATRIC" id="fig|288681.22.peg.4152"/>
<dbReference type="UniPathway" id="UPA00031">
    <property type="reaction ID" value="UER00012"/>
</dbReference>
<dbReference type="Proteomes" id="UP000002612">
    <property type="component" value="Chromosome"/>
</dbReference>
<dbReference type="GO" id="GO:0004400">
    <property type="term" value="F:histidinol-phosphate transaminase activity"/>
    <property type="evidence" value="ECO:0007669"/>
    <property type="project" value="UniProtKB-UniRule"/>
</dbReference>
<dbReference type="GO" id="GO:0030170">
    <property type="term" value="F:pyridoxal phosphate binding"/>
    <property type="evidence" value="ECO:0007669"/>
    <property type="project" value="InterPro"/>
</dbReference>
<dbReference type="GO" id="GO:0000105">
    <property type="term" value="P:L-histidine biosynthetic process"/>
    <property type="evidence" value="ECO:0007669"/>
    <property type="project" value="UniProtKB-UniRule"/>
</dbReference>
<dbReference type="CDD" id="cd00609">
    <property type="entry name" value="AAT_like"/>
    <property type="match status" value="1"/>
</dbReference>
<dbReference type="Gene3D" id="3.90.1150.10">
    <property type="entry name" value="Aspartate Aminotransferase, domain 1"/>
    <property type="match status" value="1"/>
</dbReference>
<dbReference type="Gene3D" id="3.40.640.10">
    <property type="entry name" value="Type I PLP-dependent aspartate aminotransferase-like (Major domain)"/>
    <property type="match status" value="1"/>
</dbReference>
<dbReference type="HAMAP" id="MF_01023">
    <property type="entry name" value="HisC_aminotrans_2"/>
    <property type="match status" value="1"/>
</dbReference>
<dbReference type="InterPro" id="IPR001917">
    <property type="entry name" value="Aminotrans_II_pyridoxalP_BS"/>
</dbReference>
<dbReference type="InterPro" id="IPR004839">
    <property type="entry name" value="Aminotransferase_I/II_large"/>
</dbReference>
<dbReference type="InterPro" id="IPR005861">
    <property type="entry name" value="HisP_aminotrans"/>
</dbReference>
<dbReference type="InterPro" id="IPR050106">
    <property type="entry name" value="HistidinolP_aminotransfase"/>
</dbReference>
<dbReference type="InterPro" id="IPR015424">
    <property type="entry name" value="PyrdxlP-dep_Trfase"/>
</dbReference>
<dbReference type="InterPro" id="IPR015421">
    <property type="entry name" value="PyrdxlP-dep_Trfase_major"/>
</dbReference>
<dbReference type="InterPro" id="IPR015422">
    <property type="entry name" value="PyrdxlP-dep_Trfase_small"/>
</dbReference>
<dbReference type="NCBIfam" id="TIGR01141">
    <property type="entry name" value="hisC"/>
    <property type="match status" value="1"/>
</dbReference>
<dbReference type="PANTHER" id="PTHR43643:SF3">
    <property type="entry name" value="HISTIDINOL-PHOSPHATE AMINOTRANSFERASE"/>
    <property type="match status" value="1"/>
</dbReference>
<dbReference type="PANTHER" id="PTHR43643">
    <property type="entry name" value="HISTIDINOL-PHOSPHATE AMINOTRANSFERASE 2"/>
    <property type="match status" value="1"/>
</dbReference>
<dbReference type="Pfam" id="PF00155">
    <property type="entry name" value="Aminotran_1_2"/>
    <property type="match status" value="1"/>
</dbReference>
<dbReference type="SUPFAM" id="SSF53383">
    <property type="entry name" value="PLP-dependent transferases"/>
    <property type="match status" value="1"/>
</dbReference>
<dbReference type="PROSITE" id="PS00599">
    <property type="entry name" value="AA_TRANSFER_CLASS_2"/>
    <property type="match status" value="1"/>
</dbReference>